<proteinExistence type="evidence at transcript level"/>
<accession>Q60440</accession>
<accession>O70330</accession>
<sequence>MGLRPQLAAILLCLLACTGNWTLGCHHGALKEIIHILNQVTEKGTPCTEMVVPDALSARKNSTEKDLICRASQGFRKFYFQHEVTLCLKNNSRVLKDLKKLYRGISSLFPQKSCNVNESTYTTLKDFLESLRRIMQKKYWQCGSSTF</sequence>
<comment type="function">
    <text evidence="1">Participates in at least several B-cell activation processes as well as of other cell types. It is a costimulator of DNA-synthesis. It induces the expression of class II MHC molecules on resting B-cells. It enhances both secretion and cell surface expression of IgE and IgG1. It also regulates the expression of the low affinity Fc receptor for IgE (CD23) on both lymphocytes and monocytes. Positively regulates IL31RA expression in macrophages. Stimulates autophagy in dendritic cells by interfering with mTORC1 signaling and through the induction of RUFY4.</text>
</comment>
<comment type="subcellular location">
    <subcellularLocation>
        <location>Secreted</location>
    </subcellularLocation>
</comment>
<comment type="similarity">
    <text evidence="3">Belongs to the IL-4/IL-13 family.</text>
</comment>
<feature type="signal peptide" evidence="2">
    <location>
        <begin position="1"/>
        <end position="19"/>
    </location>
</feature>
<feature type="chain" id="PRO_0000015537" description="Interleukin-4">
    <location>
        <begin position="20"/>
        <end position="147"/>
    </location>
</feature>
<feature type="glycosylation site" description="N-linked (GlcNAc...) asparagine" evidence="2">
    <location>
        <position position="20"/>
    </location>
</feature>
<feature type="glycosylation site" description="N-linked (GlcNAc...) asparagine" evidence="2">
    <location>
        <position position="61"/>
    </location>
</feature>
<feature type="glycosylation site" description="N-linked (GlcNAc...) asparagine" evidence="2">
    <location>
        <position position="90"/>
    </location>
</feature>
<feature type="glycosylation site" description="N-linked (GlcNAc...) asparagine" evidence="2">
    <location>
        <position position="117"/>
    </location>
</feature>
<feature type="disulfide bond" evidence="2">
    <location>
        <begin position="47"/>
        <end position="87"/>
    </location>
</feature>
<feature type="disulfide bond" evidence="2">
    <location>
        <begin position="69"/>
        <end position="114"/>
    </location>
</feature>
<feature type="sequence conflict" description="In Ref. 2; AAC40098." evidence="3" ref="2">
    <original>GF</original>
    <variation>VL</variation>
    <location>
        <begin position="74"/>
        <end position="75"/>
    </location>
</feature>
<reference key="1">
    <citation type="submission" date="1996-03" db="EMBL/GenBank/DDBJ databases">
        <authorList>
            <person name="Wong D.T.W."/>
            <person name="Tsuji T."/>
        </authorList>
    </citation>
    <scope>NUCLEOTIDE SEQUENCE [MRNA]</scope>
    <source>
        <strain>Syrian</strain>
    </source>
</reference>
<reference key="2">
    <citation type="journal article" date="1998" name="Infect. Immun.">
        <title>Cloning of Syrian hamster (Mesocricetus auratus) cytokine cDNAs and analysis of cytokine mRNA expression in experimental visceral leishmaniasis.</title>
        <authorList>
            <person name="Melby P.C."/>
            <person name="Tryon V.V."/>
            <person name="Chandrasekar B."/>
            <person name="Freeman G.L."/>
        </authorList>
    </citation>
    <scope>NUCLEOTIDE SEQUENCE [MRNA] OF 1-122</scope>
    <source>
        <strain>Syrian</strain>
        <tissue>Spleen</tissue>
    </source>
</reference>
<organism>
    <name type="scientific">Mesocricetus auratus</name>
    <name type="common">Golden hamster</name>
    <dbReference type="NCBI Taxonomy" id="10036"/>
    <lineage>
        <taxon>Eukaryota</taxon>
        <taxon>Metazoa</taxon>
        <taxon>Chordata</taxon>
        <taxon>Craniata</taxon>
        <taxon>Vertebrata</taxon>
        <taxon>Euteleostomi</taxon>
        <taxon>Mammalia</taxon>
        <taxon>Eutheria</taxon>
        <taxon>Euarchontoglires</taxon>
        <taxon>Glires</taxon>
        <taxon>Rodentia</taxon>
        <taxon>Myomorpha</taxon>
        <taxon>Muroidea</taxon>
        <taxon>Cricetidae</taxon>
        <taxon>Cricetinae</taxon>
        <taxon>Mesocricetus</taxon>
    </lineage>
</organism>
<evidence type="ECO:0000250" key="1">
    <source>
        <dbReference type="UniProtKB" id="P07750"/>
    </source>
</evidence>
<evidence type="ECO:0000255" key="2"/>
<evidence type="ECO:0000305" key="3"/>
<name>IL4_MESAU</name>
<gene>
    <name type="primary">IL4</name>
</gene>
<dbReference type="EMBL" id="U50415">
    <property type="protein sequence ID" value="AAA96032.1"/>
    <property type="molecule type" value="mRNA"/>
</dbReference>
<dbReference type="EMBL" id="AF046213">
    <property type="protein sequence ID" value="AAC40098.1"/>
    <property type="molecule type" value="mRNA"/>
</dbReference>
<dbReference type="SMR" id="Q60440"/>
<dbReference type="STRING" id="10036.ENSMAUP00000007897"/>
<dbReference type="GlyCosmos" id="Q60440">
    <property type="glycosylation" value="4 sites, No reported glycans"/>
</dbReference>
<dbReference type="eggNOG" id="KOG3886">
    <property type="taxonomic scope" value="Eukaryota"/>
</dbReference>
<dbReference type="Proteomes" id="UP000189706">
    <property type="component" value="Unplaced"/>
</dbReference>
<dbReference type="GO" id="GO:0005615">
    <property type="term" value="C:extracellular space"/>
    <property type="evidence" value="ECO:0007669"/>
    <property type="project" value="UniProtKB-KW"/>
</dbReference>
<dbReference type="GO" id="GO:0005125">
    <property type="term" value="F:cytokine activity"/>
    <property type="evidence" value="ECO:0007669"/>
    <property type="project" value="UniProtKB-KW"/>
</dbReference>
<dbReference type="GO" id="GO:0008083">
    <property type="term" value="F:growth factor activity"/>
    <property type="evidence" value="ECO:0007669"/>
    <property type="project" value="UniProtKB-KW"/>
</dbReference>
<dbReference type="GO" id="GO:0005136">
    <property type="term" value="F:interleukin-4 receptor binding"/>
    <property type="evidence" value="ECO:0007669"/>
    <property type="project" value="InterPro"/>
</dbReference>
<dbReference type="GO" id="GO:0042113">
    <property type="term" value="P:B cell activation"/>
    <property type="evidence" value="ECO:0007669"/>
    <property type="project" value="UniProtKB-KW"/>
</dbReference>
<dbReference type="GO" id="GO:0006955">
    <property type="term" value="P:immune response"/>
    <property type="evidence" value="ECO:0007669"/>
    <property type="project" value="InterPro"/>
</dbReference>
<dbReference type="GO" id="GO:0035771">
    <property type="term" value="P:interleukin-4-mediated signaling pathway"/>
    <property type="evidence" value="ECO:0007669"/>
    <property type="project" value="TreeGrafter"/>
</dbReference>
<dbReference type="GO" id="GO:0050728">
    <property type="term" value="P:negative regulation of inflammatory response"/>
    <property type="evidence" value="ECO:0007669"/>
    <property type="project" value="TreeGrafter"/>
</dbReference>
<dbReference type="GO" id="GO:0045893">
    <property type="term" value="P:positive regulation of DNA-templated transcription"/>
    <property type="evidence" value="ECO:0007669"/>
    <property type="project" value="TreeGrafter"/>
</dbReference>
<dbReference type="GO" id="GO:0016239">
    <property type="term" value="P:positive regulation of macroautophagy"/>
    <property type="evidence" value="ECO:0000250"/>
    <property type="project" value="UniProtKB"/>
</dbReference>
<dbReference type="GO" id="GO:0050776">
    <property type="term" value="P:regulation of immune response"/>
    <property type="evidence" value="ECO:0007669"/>
    <property type="project" value="TreeGrafter"/>
</dbReference>
<dbReference type="FunFam" id="1.20.1250.10:FF:000014">
    <property type="entry name" value="Interleukin-4"/>
    <property type="match status" value="1"/>
</dbReference>
<dbReference type="Gene3D" id="1.20.1250.10">
    <property type="match status" value="1"/>
</dbReference>
<dbReference type="InterPro" id="IPR009079">
    <property type="entry name" value="4_helix_cytokine-like_core"/>
</dbReference>
<dbReference type="InterPro" id="IPR002354">
    <property type="entry name" value="IL-4"/>
</dbReference>
<dbReference type="InterPro" id="IPR001325">
    <property type="entry name" value="IL-4/IL-13"/>
</dbReference>
<dbReference type="InterPro" id="IPR018096">
    <property type="entry name" value="IL-4/IL-13_CS"/>
</dbReference>
<dbReference type="PANTHER" id="PTHR47401">
    <property type="entry name" value="INTERLEUKIN-4"/>
    <property type="match status" value="1"/>
</dbReference>
<dbReference type="PANTHER" id="PTHR47401:SF1">
    <property type="entry name" value="INTERLEUKIN-4"/>
    <property type="match status" value="1"/>
</dbReference>
<dbReference type="Pfam" id="PF00727">
    <property type="entry name" value="IL4"/>
    <property type="match status" value="1"/>
</dbReference>
<dbReference type="PIRSF" id="PIRSF001941">
    <property type="entry name" value="Interleukin_4"/>
    <property type="match status" value="1"/>
</dbReference>
<dbReference type="PRINTS" id="PR00431">
    <property type="entry name" value="INTERLEUKIN4"/>
</dbReference>
<dbReference type="SMART" id="SM00190">
    <property type="entry name" value="IL4_13"/>
    <property type="match status" value="1"/>
</dbReference>
<dbReference type="SUPFAM" id="SSF47266">
    <property type="entry name" value="4-helical cytokines"/>
    <property type="match status" value="1"/>
</dbReference>
<dbReference type="PROSITE" id="PS00838">
    <property type="entry name" value="INTERLEUKIN_4_13"/>
    <property type="match status" value="1"/>
</dbReference>
<protein>
    <recommendedName>
        <fullName>Interleukin-4</fullName>
        <shortName>IL-4</shortName>
    </recommendedName>
    <alternativeName>
        <fullName>B-cell stimulatory factor 1</fullName>
        <shortName>BSF-1</shortName>
    </alternativeName>
    <alternativeName>
        <fullName>Lymphocyte stimulatory factor 1</fullName>
    </alternativeName>
</protein>
<keyword id="KW-0075">B-cell activation</keyword>
<keyword id="KW-0202">Cytokine</keyword>
<keyword id="KW-1015">Disulfide bond</keyword>
<keyword id="KW-0325">Glycoprotein</keyword>
<keyword id="KW-0339">Growth factor</keyword>
<keyword id="KW-1185">Reference proteome</keyword>
<keyword id="KW-0964">Secreted</keyword>
<keyword id="KW-0732">Signal</keyword>